<comment type="function">
    <text evidence="1">Involved in peptide bond synthesis. Stimulates efficient translation and peptide-bond synthesis on native or reconstituted 70S ribosomes in vitro. Probably functions indirectly by altering the affinity of the ribosome for aminoacyl-tRNA, thus increasing their reactivity as acceptors for peptidyl transferase.</text>
</comment>
<comment type="pathway">
    <text evidence="1">Protein biosynthesis; polypeptide chain elongation.</text>
</comment>
<comment type="subcellular location">
    <subcellularLocation>
        <location evidence="1">Cytoplasm</location>
    </subcellularLocation>
</comment>
<comment type="similarity">
    <text evidence="1">Belongs to the elongation factor P family.</text>
</comment>
<accession>C1ERR9</accession>
<organism>
    <name type="scientific">Bacillus cereus (strain 03BB102)</name>
    <dbReference type="NCBI Taxonomy" id="572264"/>
    <lineage>
        <taxon>Bacteria</taxon>
        <taxon>Bacillati</taxon>
        <taxon>Bacillota</taxon>
        <taxon>Bacilli</taxon>
        <taxon>Bacillales</taxon>
        <taxon>Bacillaceae</taxon>
        <taxon>Bacillus</taxon>
        <taxon>Bacillus cereus group</taxon>
    </lineage>
</organism>
<keyword id="KW-0963">Cytoplasm</keyword>
<keyword id="KW-0251">Elongation factor</keyword>
<keyword id="KW-0648">Protein biosynthesis</keyword>
<evidence type="ECO:0000255" key="1">
    <source>
        <dbReference type="HAMAP-Rule" id="MF_00141"/>
    </source>
</evidence>
<dbReference type="EMBL" id="CP001407">
    <property type="protein sequence ID" value="ACO27576.1"/>
    <property type="molecule type" value="Genomic_DNA"/>
</dbReference>
<dbReference type="RefSeq" id="WP_000626508.1">
    <property type="nucleotide sequence ID" value="NZ_CP009318.1"/>
</dbReference>
<dbReference type="SMR" id="C1ERR9"/>
<dbReference type="KEGG" id="bcx:BCA_4305"/>
<dbReference type="PATRIC" id="fig|572264.18.peg.4258"/>
<dbReference type="UniPathway" id="UPA00345"/>
<dbReference type="Proteomes" id="UP000002210">
    <property type="component" value="Chromosome"/>
</dbReference>
<dbReference type="GO" id="GO:0005737">
    <property type="term" value="C:cytoplasm"/>
    <property type="evidence" value="ECO:0007669"/>
    <property type="project" value="UniProtKB-SubCell"/>
</dbReference>
<dbReference type="GO" id="GO:0003746">
    <property type="term" value="F:translation elongation factor activity"/>
    <property type="evidence" value="ECO:0007669"/>
    <property type="project" value="UniProtKB-UniRule"/>
</dbReference>
<dbReference type="GO" id="GO:0043043">
    <property type="term" value="P:peptide biosynthetic process"/>
    <property type="evidence" value="ECO:0007669"/>
    <property type="project" value="InterPro"/>
</dbReference>
<dbReference type="CDD" id="cd04470">
    <property type="entry name" value="S1_EF-P_repeat_1"/>
    <property type="match status" value="1"/>
</dbReference>
<dbReference type="CDD" id="cd05794">
    <property type="entry name" value="S1_EF-P_repeat_2"/>
    <property type="match status" value="1"/>
</dbReference>
<dbReference type="FunFam" id="2.30.30.30:FF:000010">
    <property type="entry name" value="Elongation factor P"/>
    <property type="match status" value="1"/>
</dbReference>
<dbReference type="FunFam" id="2.40.50.140:FF:000004">
    <property type="entry name" value="Elongation factor P"/>
    <property type="match status" value="1"/>
</dbReference>
<dbReference type="FunFam" id="2.40.50.140:FF:000009">
    <property type="entry name" value="Elongation factor P"/>
    <property type="match status" value="1"/>
</dbReference>
<dbReference type="Gene3D" id="2.30.30.30">
    <property type="match status" value="1"/>
</dbReference>
<dbReference type="Gene3D" id="2.40.50.140">
    <property type="entry name" value="Nucleic acid-binding proteins"/>
    <property type="match status" value="2"/>
</dbReference>
<dbReference type="HAMAP" id="MF_00141">
    <property type="entry name" value="EF_P"/>
    <property type="match status" value="1"/>
</dbReference>
<dbReference type="InterPro" id="IPR015365">
    <property type="entry name" value="Elong-fact-P_C"/>
</dbReference>
<dbReference type="InterPro" id="IPR012340">
    <property type="entry name" value="NA-bd_OB-fold"/>
</dbReference>
<dbReference type="InterPro" id="IPR014722">
    <property type="entry name" value="Rib_uL2_dom2"/>
</dbReference>
<dbReference type="InterPro" id="IPR020599">
    <property type="entry name" value="Transl_elong_fac_P/YeiP"/>
</dbReference>
<dbReference type="InterPro" id="IPR013185">
    <property type="entry name" value="Transl_elong_KOW-like"/>
</dbReference>
<dbReference type="InterPro" id="IPR001059">
    <property type="entry name" value="Transl_elong_P/YeiP_cen"/>
</dbReference>
<dbReference type="InterPro" id="IPR013852">
    <property type="entry name" value="Transl_elong_P/YeiP_CS"/>
</dbReference>
<dbReference type="InterPro" id="IPR011768">
    <property type="entry name" value="Transl_elongation_fac_P"/>
</dbReference>
<dbReference type="InterPro" id="IPR008991">
    <property type="entry name" value="Translation_prot_SH3-like_sf"/>
</dbReference>
<dbReference type="NCBIfam" id="TIGR00038">
    <property type="entry name" value="efp"/>
    <property type="match status" value="1"/>
</dbReference>
<dbReference type="NCBIfam" id="NF001810">
    <property type="entry name" value="PRK00529.1"/>
    <property type="match status" value="1"/>
</dbReference>
<dbReference type="PANTHER" id="PTHR30053">
    <property type="entry name" value="ELONGATION FACTOR P"/>
    <property type="match status" value="1"/>
</dbReference>
<dbReference type="PANTHER" id="PTHR30053:SF12">
    <property type="entry name" value="ELONGATION FACTOR P (EF-P) FAMILY PROTEIN"/>
    <property type="match status" value="1"/>
</dbReference>
<dbReference type="Pfam" id="PF01132">
    <property type="entry name" value="EFP"/>
    <property type="match status" value="1"/>
</dbReference>
<dbReference type="Pfam" id="PF08207">
    <property type="entry name" value="EFP_N"/>
    <property type="match status" value="1"/>
</dbReference>
<dbReference type="Pfam" id="PF09285">
    <property type="entry name" value="Elong-fact-P_C"/>
    <property type="match status" value="1"/>
</dbReference>
<dbReference type="PIRSF" id="PIRSF005901">
    <property type="entry name" value="EF-P"/>
    <property type="match status" value="1"/>
</dbReference>
<dbReference type="SMART" id="SM01185">
    <property type="entry name" value="EFP"/>
    <property type="match status" value="1"/>
</dbReference>
<dbReference type="SMART" id="SM00841">
    <property type="entry name" value="Elong-fact-P_C"/>
    <property type="match status" value="1"/>
</dbReference>
<dbReference type="SUPFAM" id="SSF50249">
    <property type="entry name" value="Nucleic acid-binding proteins"/>
    <property type="match status" value="2"/>
</dbReference>
<dbReference type="SUPFAM" id="SSF50104">
    <property type="entry name" value="Translation proteins SH3-like domain"/>
    <property type="match status" value="1"/>
</dbReference>
<dbReference type="PROSITE" id="PS01275">
    <property type="entry name" value="EFP"/>
    <property type="match status" value="1"/>
</dbReference>
<proteinExistence type="inferred from homology"/>
<name>EFP_BACC3</name>
<sequence length="185" mass="20661">MISVNDFRTGLTIAVDNGLWQVLDFQHVKPGKGAAFVRSKLRNLRTGSVQEKTFRAGEKVEKAHIENRRMQYLYASGEAHVFMDNGTYEQIELGEKQIERELKFLKENMEVSIMTYQGEVLGVELPNTVELQVTETEPGIKGDTASNVTKPATLETGLVVQVPIFINEGETLIINTGEGKYVSRA</sequence>
<feature type="chain" id="PRO_1000122989" description="Elongation factor P">
    <location>
        <begin position="1"/>
        <end position="185"/>
    </location>
</feature>
<gene>
    <name evidence="1" type="primary">efp</name>
    <name type="ordered locus">BCA_4305</name>
</gene>
<protein>
    <recommendedName>
        <fullName evidence="1">Elongation factor P</fullName>
        <shortName evidence="1">EF-P</shortName>
    </recommendedName>
</protein>
<reference key="1">
    <citation type="submission" date="2009-02" db="EMBL/GenBank/DDBJ databases">
        <title>Genome sequence of Bacillus cereus 03BB102.</title>
        <authorList>
            <person name="Dodson R.J."/>
            <person name="Jackson P."/>
            <person name="Munk A.C."/>
            <person name="Brettin T."/>
            <person name="Bruce D."/>
            <person name="Detter C."/>
            <person name="Tapia R."/>
            <person name="Han C."/>
            <person name="Sutton G."/>
            <person name="Sims D."/>
        </authorList>
    </citation>
    <scope>NUCLEOTIDE SEQUENCE [LARGE SCALE GENOMIC DNA]</scope>
    <source>
        <strain>03BB102</strain>
    </source>
</reference>